<sequence>MSTFNSNFKLGTYLTQVRQENPLVHAITNYVTMNDCANITLAAGASPAMCESRDEVSDFVPLAKALYINIGTINQEHKDSIYLAAEKASELEIPIVLDPVGAVAIKSRLDLVKDLLTNYNVSCIKGNNAEIKCLAGRKGHGKGMDSLDLGEDIQMVNSELSEKYNTMVLATGKTDLITKGNITVKVSNGTPLLGRITGSGCMLGILISAFIGASDNDWEAGIAATVSMGVVGEMAEESISSSTDLGSFRVKIFDHMAALTSKELQERGNVSEL</sequence>
<accession>B2A1A8</accession>
<gene>
    <name evidence="1" type="primary">thiM</name>
    <name type="ordered locus">Nther_2483</name>
</gene>
<organism>
    <name type="scientific">Natranaerobius thermophilus (strain ATCC BAA-1301 / DSM 18059 / JW/NM-WN-LF)</name>
    <dbReference type="NCBI Taxonomy" id="457570"/>
    <lineage>
        <taxon>Bacteria</taxon>
        <taxon>Bacillati</taxon>
        <taxon>Bacillota</taxon>
        <taxon>Clostridia</taxon>
        <taxon>Natranaerobiales</taxon>
        <taxon>Natranaerobiaceae</taxon>
        <taxon>Natranaerobius</taxon>
    </lineage>
</organism>
<protein>
    <recommendedName>
        <fullName evidence="1">Hydroxyethylthiazole kinase</fullName>
        <ecNumber evidence="1">2.7.1.50</ecNumber>
    </recommendedName>
    <alternativeName>
        <fullName evidence="1">4-methyl-5-beta-hydroxyethylthiazole kinase</fullName>
        <shortName evidence="1">TH kinase</shortName>
        <shortName evidence="1">Thz kinase</shortName>
    </alternativeName>
</protein>
<keyword id="KW-0067">ATP-binding</keyword>
<keyword id="KW-0418">Kinase</keyword>
<keyword id="KW-0460">Magnesium</keyword>
<keyword id="KW-0479">Metal-binding</keyword>
<keyword id="KW-0547">Nucleotide-binding</keyword>
<keyword id="KW-1185">Reference proteome</keyword>
<keyword id="KW-0784">Thiamine biosynthesis</keyword>
<keyword id="KW-0808">Transferase</keyword>
<name>THIM_NATTJ</name>
<reference key="1">
    <citation type="submission" date="2008-04" db="EMBL/GenBank/DDBJ databases">
        <title>Complete sequence of chromosome of Natranaerobius thermophilus JW/NM-WN-LF.</title>
        <authorList>
            <consortium name="US DOE Joint Genome Institute"/>
            <person name="Copeland A."/>
            <person name="Lucas S."/>
            <person name="Lapidus A."/>
            <person name="Glavina del Rio T."/>
            <person name="Dalin E."/>
            <person name="Tice H."/>
            <person name="Bruce D."/>
            <person name="Goodwin L."/>
            <person name="Pitluck S."/>
            <person name="Chertkov O."/>
            <person name="Brettin T."/>
            <person name="Detter J.C."/>
            <person name="Han C."/>
            <person name="Kuske C.R."/>
            <person name="Schmutz J."/>
            <person name="Larimer F."/>
            <person name="Land M."/>
            <person name="Hauser L."/>
            <person name="Kyrpides N."/>
            <person name="Lykidis A."/>
            <person name="Mesbah N.M."/>
            <person name="Wiegel J."/>
        </authorList>
    </citation>
    <scope>NUCLEOTIDE SEQUENCE [LARGE SCALE GENOMIC DNA]</scope>
    <source>
        <strain>ATCC BAA-1301 / DSM 18059 / JW/NM-WN-LF</strain>
    </source>
</reference>
<dbReference type="EC" id="2.7.1.50" evidence="1"/>
<dbReference type="EMBL" id="CP001034">
    <property type="protein sequence ID" value="ACB86046.1"/>
    <property type="molecule type" value="Genomic_DNA"/>
</dbReference>
<dbReference type="RefSeq" id="WP_012448890.1">
    <property type="nucleotide sequence ID" value="NC_010718.1"/>
</dbReference>
<dbReference type="SMR" id="B2A1A8"/>
<dbReference type="FunCoup" id="B2A1A8">
    <property type="interactions" value="139"/>
</dbReference>
<dbReference type="STRING" id="457570.Nther_2483"/>
<dbReference type="KEGG" id="nth:Nther_2483"/>
<dbReference type="eggNOG" id="COG2145">
    <property type="taxonomic scope" value="Bacteria"/>
</dbReference>
<dbReference type="HOGENOM" id="CLU_019943_0_0_9"/>
<dbReference type="InParanoid" id="B2A1A8"/>
<dbReference type="OrthoDB" id="9778146at2"/>
<dbReference type="UniPathway" id="UPA00060">
    <property type="reaction ID" value="UER00139"/>
</dbReference>
<dbReference type="Proteomes" id="UP000001683">
    <property type="component" value="Chromosome"/>
</dbReference>
<dbReference type="GO" id="GO:0005524">
    <property type="term" value="F:ATP binding"/>
    <property type="evidence" value="ECO:0007669"/>
    <property type="project" value="UniProtKB-UniRule"/>
</dbReference>
<dbReference type="GO" id="GO:0004417">
    <property type="term" value="F:hydroxyethylthiazole kinase activity"/>
    <property type="evidence" value="ECO:0007669"/>
    <property type="project" value="UniProtKB-UniRule"/>
</dbReference>
<dbReference type="GO" id="GO:0000287">
    <property type="term" value="F:magnesium ion binding"/>
    <property type="evidence" value="ECO:0007669"/>
    <property type="project" value="UniProtKB-UniRule"/>
</dbReference>
<dbReference type="GO" id="GO:0009228">
    <property type="term" value="P:thiamine biosynthetic process"/>
    <property type="evidence" value="ECO:0007669"/>
    <property type="project" value="UniProtKB-KW"/>
</dbReference>
<dbReference type="GO" id="GO:0009229">
    <property type="term" value="P:thiamine diphosphate biosynthetic process"/>
    <property type="evidence" value="ECO:0007669"/>
    <property type="project" value="UniProtKB-UniRule"/>
</dbReference>
<dbReference type="CDD" id="cd01170">
    <property type="entry name" value="THZ_kinase"/>
    <property type="match status" value="1"/>
</dbReference>
<dbReference type="Gene3D" id="3.40.1190.20">
    <property type="match status" value="1"/>
</dbReference>
<dbReference type="HAMAP" id="MF_00228">
    <property type="entry name" value="Thz_kinase"/>
    <property type="match status" value="1"/>
</dbReference>
<dbReference type="InterPro" id="IPR000417">
    <property type="entry name" value="Hyethyz_kinase"/>
</dbReference>
<dbReference type="InterPro" id="IPR029056">
    <property type="entry name" value="Ribokinase-like"/>
</dbReference>
<dbReference type="NCBIfam" id="NF006830">
    <property type="entry name" value="PRK09355.1"/>
    <property type="match status" value="1"/>
</dbReference>
<dbReference type="NCBIfam" id="TIGR00694">
    <property type="entry name" value="thiM"/>
    <property type="match status" value="1"/>
</dbReference>
<dbReference type="Pfam" id="PF02110">
    <property type="entry name" value="HK"/>
    <property type="match status" value="1"/>
</dbReference>
<dbReference type="PIRSF" id="PIRSF000513">
    <property type="entry name" value="Thz_kinase"/>
    <property type="match status" value="1"/>
</dbReference>
<dbReference type="PRINTS" id="PR01099">
    <property type="entry name" value="HYETHTZKNASE"/>
</dbReference>
<dbReference type="SUPFAM" id="SSF53613">
    <property type="entry name" value="Ribokinase-like"/>
    <property type="match status" value="1"/>
</dbReference>
<proteinExistence type="inferred from homology"/>
<comment type="function">
    <text evidence="1">Catalyzes the phosphorylation of the hydroxyl group of 4-methyl-5-beta-hydroxyethylthiazole (THZ).</text>
</comment>
<comment type="catalytic activity">
    <reaction evidence="1">
        <text>5-(2-hydroxyethyl)-4-methylthiazole + ATP = 4-methyl-5-(2-phosphooxyethyl)-thiazole + ADP + H(+)</text>
        <dbReference type="Rhea" id="RHEA:24212"/>
        <dbReference type="ChEBI" id="CHEBI:15378"/>
        <dbReference type="ChEBI" id="CHEBI:17957"/>
        <dbReference type="ChEBI" id="CHEBI:30616"/>
        <dbReference type="ChEBI" id="CHEBI:58296"/>
        <dbReference type="ChEBI" id="CHEBI:456216"/>
        <dbReference type="EC" id="2.7.1.50"/>
    </reaction>
</comment>
<comment type="cofactor">
    <cofactor evidence="1">
        <name>Mg(2+)</name>
        <dbReference type="ChEBI" id="CHEBI:18420"/>
    </cofactor>
</comment>
<comment type="pathway">
    <text evidence="1">Cofactor biosynthesis; thiamine diphosphate biosynthesis; 4-methyl-5-(2-phosphoethyl)-thiazole from 5-(2-hydroxyethyl)-4-methylthiazole: step 1/1.</text>
</comment>
<comment type="similarity">
    <text evidence="1">Belongs to the Thz kinase family.</text>
</comment>
<evidence type="ECO:0000255" key="1">
    <source>
        <dbReference type="HAMAP-Rule" id="MF_00228"/>
    </source>
</evidence>
<feature type="chain" id="PRO_0000383886" description="Hydroxyethylthiazole kinase">
    <location>
        <begin position="1"/>
        <end position="273"/>
    </location>
</feature>
<feature type="binding site" evidence="1">
    <location>
        <position position="49"/>
    </location>
    <ligand>
        <name>substrate</name>
    </ligand>
</feature>
<feature type="binding site" evidence="1">
    <location>
        <position position="125"/>
    </location>
    <ligand>
        <name>ATP</name>
        <dbReference type="ChEBI" id="CHEBI:30616"/>
    </ligand>
</feature>
<feature type="binding site" evidence="1">
    <location>
        <position position="171"/>
    </location>
    <ligand>
        <name>ATP</name>
        <dbReference type="ChEBI" id="CHEBI:30616"/>
    </ligand>
</feature>
<feature type="binding site" evidence="1">
    <location>
        <position position="198"/>
    </location>
    <ligand>
        <name>substrate</name>
    </ligand>
</feature>